<accession>Q2FEA5</accession>
<protein>
    <recommendedName>
        <fullName>Oxygen sensor histidine kinase NreB</fullName>
        <ecNumber>2.7.13.3</ecNumber>
    </recommendedName>
    <alternativeName>
        <fullName>Nitrogen regulation protein B</fullName>
    </alternativeName>
</protein>
<keyword id="KW-0004">4Fe-4S</keyword>
<keyword id="KW-0067">ATP-binding</keyword>
<keyword id="KW-0963">Cytoplasm</keyword>
<keyword id="KW-0408">Iron</keyword>
<keyword id="KW-0411">Iron-sulfur</keyword>
<keyword id="KW-0418">Kinase</keyword>
<keyword id="KW-0479">Metal-binding</keyword>
<keyword id="KW-0547">Nucleotide-binding</keyword>
<keyword id="KW-0597">Phosphoprotein</keyword>
<keyword id="KW-0808">Transferase</keyword>
<keyword id="KW-0902">Two-component regulatory system</keyword>
<gene>
    <name type="primary">nreB</name>
    <name type="ordered locus">SAUSA300_2338</name>
</gene>
<proteinExistence type="inferred from homology"/>
<comment type="function">
    <text evidence="1">Member of the two-component regulatory system NreB/NreC involved in the control of dissimilatory nitrate/nitrite reduction in response to oxygen. NreB functions as a direct oxygen sensor histidine kinase which is autophosphorylated, in the absence of oxygen, probably at the conserved histidine residue, and transfers its phosphate group probably to a conserved aspartate residue of NreC. NreB/NreC activates the expression of the nitrate (narGHJI) and nitrite (nir) reductase operons, as well as the putative nitrate transporter gene narT (By similarity).</text>
</comment>
<comment type="catalytic activity">
    <reaction>
        <text>ATP + protein L-histidine = ADP + protein N-phospho-L-histidine.</text>
        <dbReference type="EC" id="2.7.13.3"/>
    </reaction>
</comment>
<comment type="cofactor">
    <cofactor evidence="4">
        <name>[4Fe-4S] cluster</name>
        <dbReference type="ChEBI" id="CHEBI:49883"/>
    </cofactor>
    <text evidence="4">Binds 1 [4Fe-4S] cluster.</text>
</comment>
<comment type="subcellular location">
    <subcellularLocation>
        <location evidence="4">Cytoplasm</location>
    </subcellularLocation>
</comment>
<comment type="PTM">
    <text evidence="1">Autophosphorylated.</text>
</comment>
<feature type="chain" id="PRO_0000349337" description="Oxygen sensor histidine kinase NreB">
    <location>
        <begin position="1"/>
        <end position="344"/>
    </location>
</feature>
<feature type="domain" description="Histidine kinase" evidence="3">
    <location>
        <begin position="152"/>
        <end position="344"/>
    </location>
</feature>
<feature type="binding site" evidence="2">
    <location>
        <position position="58"/>
    </location>
    <ligand>
        <name>[4Fe-4S] cluster</name>
        <dbReference type="ChEBI" id="CHEBI:49883"/>
    </ligand>
</feature>
<feature type="binding site" evidence="2">
    <location>
        <position position="61"/>
    </location>
    <ligand>
        <name>[4Fe-4S] cluster</name>
        <dbReference type="ChEBI" id="CHEBI:49883"/>
    </ligand>
</feature>
<feature type="binding site" evidence="2">
    <location>
        <position position="73"/>
    </location>
    <ligand>
        <name>[4Fe-4S] cluster</name>
        <dbReference type="ChEBI" id="CHEBI:49883"/>
    </ligand>
</feature>
<feature type="binding site" evidence="2">
    <location>
        <position position="76"/>
    </location>
    <ligand>
        <name>[4Fe-4S] cluster</name>
        <dbReference type="ChEBI" id="CHEBI:49883"/>
    </ligand>
</feature>
<feature type="modified residue" description="Phosphohistidine; by autocatalysis" evidence="3">
    <location>
        <position position="158"/>
    </location>
</feature>
<dbReference type="EC" id="2.7.13.3"/>
<dbReference type="EMBL" id="CP000255">
    <property type="protein sequence ID" value="ABD22301.1"/>
    <property type="molecule type" value="Genomic_DNA"/>
</dbReference>
<dbReference type="RefSeq" id="WP_000606546.1">
    <property type="nucleotide sequence ID" value="NZ_CP027476.1"/>
</dbReference>
<dbReference type="SMR" id="Q2FEA5"/>
<dbReference type="KEGG" id="saa:SAUSA300_2338"/>
<dbReference type="HOGENOM" id="CLU_000445_114_0_9"/>
<dbReference type="OMA" id="CEGYSNE"/>
<dbReference type="Proteomes" id="UP000001939">
    <property type="component" value="Chromosome"/>
</dbReference>
<dbReference type="GO" id="GO:0005737">
    <property type="term" value="C:cytoplasm"/>
    <property type="evidence" value="ECO:0007669"/>
    <property type="project" value="UniProtKB-SubCell"/>
</dbReference>
<dbReference type="GO" id="GO:0016020">
    <property type="term" value="C:membrane"/>
    <property type="evidence" value="ECO:0007669"/>
    <property type="project" value="InterPro"/>
</dbReference>
<dbReference type="GO" id="GO:0051539">
    <property type="term" value="F:4 iron, 4 sulfur cluster binding"/>
    <property type="evidence" value="ECO:0007669"/>
    <property type="project" value="UniProtKB-KW"/>
</dbReference>
<dbReference type="GO" id="GO:0005524">
    <property type="term" value="F:ATP binding"/>
    <property type="evidence" value="ECO:0007669"/>
    <property type="project" value="UniProtKB-KW"/>
</dbReference>
<dbReference type="GO" id="GO:0005506">
    <property type="term" value="F:iron ion binding"/>
    <property type="evidence" value="ECO:0007669"/>
    <property type="project" value="InterPro"/>
</dbReference>
<dbReference type="GO" id="GO:0000155">
    <property type="term" value="F:phosphorelay sensor kinase activity"/>
    <property type="evidence" value="ECO:0007669"/>
    <property type="project" value="InterPro"/>
</dbReference>
<dbReference type="GO" id="GO:0046983">
    <property type="term" value="F:protein dimerization activity"/>
    <property type="evidence" value="ECO:0007669"/>
    <property type="project" value="InterPro"/>
</dbReference>
<dbReference type="CDD" id="cd16917">
    <property type="entry name" value="HATPase_UhpB-NarQ-NarX-like"/>
    <property type="match status" value="1"/>
</dbReference>
<dbReference type="Gene3D" id="1.20.5.1930">
    <property type="match status" value="1"/>
</dbReference>
<dbReference type="Gene3D" id="3.30.565.10">
    <property type="entry name" value="Histidine kinase-like ATPase, C-terminal domain"/>
    <property type="match status" value="1"/>
</dbReference>
<dbReference type="InterPro" id="IPR036890">
    <property type="entry name" value="HATPase_C_sf"/>
</dbReference>
<dbReference type="InterPro" id="IPR005467">
    <property type="entry name" value="His_kinase_dom"/>
</dbReference>
<dbReference type="InterPro" id="IPR050482">
    <property type="entry name" value="Sensor_HK_TwoCompSys"/>
</dbReference>
<dbReference type="InterPro" id="IPR004358">
    <property type="entry name" value="Sig_transdc_His_kin-like_C"/>
</dbReference>
<dbReference type="InterPro" id="IPR011712">
    <property type="entry name" value="Sig_transdc_His_kin_sub3_dim/P"/>
</dbReference>
<dbReference type="InterPro" id="IPR017203">
    <property type="entry name" value="Sig_transdc_His_kinase_NreB"/>
</dbReference>
<dbReference type="PANTHER" id="PTHR24421">
    <property type="entry name" value="NITRATE/NITRITE SENSOR PROTEIN NARX-RELATED"/>
    <property type="match status" value="1"/>
</dbReference>
<dbReference type="PANTHER" id="PTHR24421:SF10">
    <property type="entry name" value="NITRATE_NITRITE SENSOR PROTEIN NARQ"/>
    <property type="match status" value="1"/>
</dbReference>
<dbReference type="Pfam" id="PF02518">
    <property type="entry name" value="HATPase_c"/>
    <property type="match status" value="1"/>
</dbReference>
<dbReference type="Pfam" id="PF07730">
    <property type="entry name" value="HisKA_3"/>
    <property type="match status" value="1"/>
</dbReference>
<dbReference type="PIRSF" id="PIRSF037432">
    <property type="entry name" value="STHK_NreB"/>
    <property type="match status" value="1"/>
</dbReference>
<dbReference type="PRINTS" id="PR00344">
    <property type="entry name" value="BCTRLSENSOR"/>
</dbReference>
<dbReference type="SMART" id="SM00387">
    <property type="entry name" value="HATPase_c"/>
    <property type="match status" value="1"/>
</dbReference>
<dbReference type="SUPFAM" id="SSF55874">
    <property type="entry name" value="ATPase domain of HSP90 chaperone/DNA topoisomerase II/histidine kinase"/>
    <property type="match status" value="1"/>
</dbReference>
<dbReference type="PROSITE" id="PS50109">
    <property type="entry name" value="HIS_KIN"/>
    <property type="match status" value="1"/>
</dbReference>
<evidence type="ECO:0000250" key="1"/>
<evidence type="ECO:0000255" key="2"/>
<evidence type="ECO:0000255" key="3">
    <source>
        <dbReference type="PROSITE-ProRule" id="PRU00107"/>
    </source>
</evidence>
<evidence type="ECO:0000305" key="4"/>
<organism>
    <name type="scientific">Staphylococcus aureus (strain USA300)</name>
    <dbReference type="NCBI Taxonomy" id="367830"/>
    <lineage>
        <taxon>Bacteria</taxon>
        <taxon>Bacillati</taxon>
        <taxon>Bacillota</taxon>
        <taxon>Bacilli</taxon>
        <taxon>Bacillales</taxon>
        <taxon>Staphylococcaceae</taxon>
        <taxon>Staphylococcus</taxon>
    </lineage>
</organism>
<name>NREB_STAA3</name>
<reference key="1">
    <citation type="journal article" date="2006" name="Lancet">
        <title>Complete genome sequence of USA300, an epidemic clone of community-acquired meticillin-resistant Staphylococcus aureus.</title>
        <authorList>
            <person name="Diep B.A."/>
            <person name="Gill S.R."/>
            <person name="Chang R.F."/>
            <person name="Phan T.H."/>
            <person name="Chen J.H."/>
            <person name="Davidson M.G."/>
            <person name="Lin F."/>
            <person name="Lin J."/>
            <person name="Carleton H.A."/>
            <person name="Mongodin E.F."/>
            <person name="Sensabaugh G.F."/>
            <person name="Perdreau-Remington F."/>
        </authorList>
    </citation>
    <scope>NUCLEOTIDE SEQUENCE [LARGE SCALE GENOMIC DNA]</scope>
    <source>
        <strain>USA300</strain>
    </source>
</reference>
<sequence>MINEDSIQLDTLLKKYYEHSIEKIVFADDNGKIIAMNDAAKDILSEEDNYSAVANAICHRCEGYTNAYDVQSCKDCFLESMQVQATNFQVFMKTKDQKVMPFTATYQLIDQDRGIHAFTLQNVSSQIEQQEKLHQQRMMRKTISAQENERKRISRELHDSVIQEMLNVDVQLRLLKYQEDTTKLLEDAENIEYIVAKLIDDIRNMSVELRPASLDDLGLEAAFKSYFKQFEENYGIKIIYTSNIKNTRFDSDIETVVYRVVQEAILNALKYADVNEINVGIRQTGRHLVAEVIDAGNGFDPSSKPKGSGLGLYGMNERAELVSGSVNIETKIGEGTNVTLNIPI</sequence>